<proteinExistence type="inferred from homology"/>
<comment type="function">
    <text evidence="1">Presumably involved in the processing and regular turnover of intracellular proteins. Catalyzes the removal of unsubstituted N-terminal amino acids from various peptides.</text>
</comment>
<comment type="catalytic activity">
    <reaction evidence="1">
        <text>Release of an N-terminal amino acid, Xaa-|-Yaa-, in which Xaa is preferably Leu, but may be other amino acids including Pro although not Arg or Lys, and Yaa may be Pro. Amino acid amides and methyl esters are also readily hydrolyzed, but rates on arylamides are exceedingly low.</text>
        <dbReference type="EC" id="3.4.11.1"/>
    </reaction>
</comment>
<comment type="catalytic activity">
    <reaction evidence="1">
        <text>Release of an N-terminal amino acid, preferentially leucine, but not glutamic or aspartic acids.</text>
        <dbReference type="EC" id="3.4.11.10"/>
    </reaction>
</comment>
<comment type="cofactor">
    <cofactor evidence="1">
        <name>Mn(2+)</name>
        <dbReference type="ChEBI" id="CHEBI:29035"/>
    </cofactor>
    <text evidence="1">Binds 2 manganese ions per subunit.</text>
</comment>
<comment type="subcellular location">
    <subcellularLocation>
        <location evidence="1">Cytoplasm</location>
    </subcellularLocation>
</comment>
<comment type="similarity">
    <text evidence="1">Belongs to the peptidase M17 family.</text>
</comment>
<dbReference type="EC" id="3.4.11.1" evidence="1"/>
<dbReference type="EC" id="3.4.11.10" evidence="1"/>
<dbReference type="EMBL" id="CP000409">
    <property type="protein sequence ID" value="ABV73094.1"/>
    <property type="molecule type" value="Genomic_DNA"/>
</dbReference>
<dbReference type="RefSeq" id="WP_012148295.1">
    <property type="nucleotide sequence ID" value="NC_009879.1"/>
</dbReference>
<dbReference type="SMR" id="A8EXL1"/>
<dbReference type="STRING" id="293613.A1E_00730"/>
<dbReference type="MEROPS" id="M17.003"/>
<dbReference type="KEGG" id="rcm:A1E_00730"/>
<dbReference type="eggNOG" id="COG0260">
    <property type="taxonomic scope" value="Bacteria"/>
</dbReference>
<dbReference type="HOGENOM" id="CLU_013734_6_0_5"/>
<dbReference type="Proteomes" id="UP000007056">
    <property type="component" value="Chromosome"/>
</dbReference>
<dbReference type="GO" id="GO:0005737">
    <property type="term" value="C:cytoplasm"/>
    <property type="evidence" value="ECO:0007669"/>
    <property type="project" value="UniProtKB-SubCell"/>
</dbReference>
<dbReference type="GO" id="GO:0030145">
    <property type="term" value="F:manganese ion binding"/>
    <property type="evidence" value="ECO:0007669"/>
    <property type="project" value="UniProtKB-UniRule"/>
</dbReference>
<dbReference type="GO" id="GO:0070006">
    <property type="term" value="F:metalloaminopeptidase activity"/>
    <property type="evidence" value="ECO:0007669"/>
    <property type="project" value="InterPro"/>
</dbReference>
<dbReference type="GO" id="GO:0006508">
    <property type="term" value="P:proteolysis"/>
    <property type="evidence" value="ECO:0007669"/>
    <property type="project" value="UniProtKB-KW"/>
</dbReference>
<dbReference type="CDD" id="cd00433">
    <property type="entry name" value="Peptidase_M17"/>
    <property type="match status" value="1"/>
</dbReference>
<dbReference type="Gene3D" id="3.40.220.10">
    <property type="entry name" value="Leucine Aminopeptidase, subunit E, domain 1"/>
    <property type="match status" value="1"/>
</dbReference>
<dbReference type="Gene3D" id="3.40.630.10">
    <property type="entry name" value="Zn peptidases"/>
    <property type="match status" value="1"/>
</dbReference>
<dbReference type="HAMAP" id="MF_00181">
    <property type="entry name" value="Cytosol_peptidase_M17"/>
    <property type="match status" value="1"/>
</dbReference>
<dbReference type="InterPro" id="IPR011356">
    <property type="entry name" value="Leucine_aapep/pepB"/>
</dbReference>
<dbReference type="InterPro" id="IPR043472">
    <property type="entry name" value="Macro_dom-like"/>
</dbReference>
<dbReference type="InterPro" id="IPR000819">
    <property type="entry name" value="Peptidase_M17_C"/>
</dbReference>
<dbReference type="InterPro" id="IPR023042">
    <property type="entry name" value="Peptidase_M17_leu_NH2_pept"/>
</dbReference>
<dbReference type="InterPro" id="IPR008283">
    <property type="entry name" value="Peptidase_M17_N"/>
</dbReference>
<dbReference type="NCBIfam" id="NF002073">
    <property type="entry name" value="PRK00913.1-2"/>
    <property type="match status" value="1"/>
</dbReference>
<dbReference type="NCBIfam" id="NF002074">
    <property type="entry name" value="PRK00913.1-4"/>
    <property type="match status" value="1"/>
</dbReference>
<dbReference type="NCBIfam" id="NF002075">
    <property type="entry name" value="PRK00913.2-2"/>
    <property type="match status" value="1"/>
</dbReference>
<dbReference type="NCBIfam" id="NF002077">
    <property type="entry name" value="PRK00913.2-4"/>
    <property type="match status" value="1"/>
</dbReference>
<dbReference type="PANTHER" id="PTHR11963:SF23">
    <property type="entry name" value="CYTOSOL AMINOPEPTIDASE"/>
    <property type="match status" value="1"/>
</dbReference>
<dbReference type="PANTHER" id="PTHR11963">
    <property type="entry name" value="LEUCINE AMINOPEPTIDASE-RELATED"/>
    <property type="match status" value="1"/>
</dbReference>
<dbReference type="Pfam" id="PF00883">
    <property type="entry name" value="Peptidase_M17"/>
    <property type="match status" value="1"/>
</dbReference>
<dbReference type="Pfam" id="PF02789">
    <property type="entry name" value="Peptidase_M17_N"/>
    <property type="match status" value="1"/>
</dbReference>
<dbReference type="PRINTS" id="PR00481">
    <property type="entry name" value="LAMNOPPTDASE"/>
</dbReference>
<dbReference type="SUPFAM" id="SSF52949">
    <property type="entry name" value="Macro domain-like"/>
    <property type="match status" value="1"/>
</dbReference>
<dbReference type="SUPFAM" id="SSF53187">
    <property type="entry name" value="Zn-dependent exopeptidases"/>
    <property type="match status" value="1"/>
</dbReference>
<dbReference type="PROSITE" id="PS00631">
    <property type="entry name" value="CYTOSOL_AP"/>
    <property type="match status" value="1"/>
</dbReference>
<accession>A8EXL1</accession>
<sequence>MLNVNFTNGELLNTQGLVVFIDEQLKLDSNLITLDQQHHGLISKTIADKLQFTGKYGQIKVIPSVIKSGEIKYLIIAGLGTEEKLTEAKVEELGGKILQYATSAKISTISLKIINRISRFTSQTFASLVASGAFLASYRFDKYRTNLKEAEKFAVESIEVFTDNNTEAAKLFEVKKLVAEAVFFTRDISNEPSNIKTPQVYAERIVDILEPLGVDVDIIGEREMKNLGMGALLGVGQGSQNESKLVVMEYKGGSKYPTIALVGKGVIFDTGGISLKPSSNMHLMRYDMGGSAAVVGSMIAVAGQKLPVNIVGVVGLVENMLSGNAQRPGDVVTTMSGQTVEVLNTDAEGRLVLADAVWYAQEKFKPKCLIDVATLTGAITVALGSTYAGCFSNNDELASKLIKAGEEVNEKLWRMPLHDEYDAMIGSDIADMANISNIPRAAGSCIAAHFIKRFIKDGVDWAHLDIAGVANSNKVSSLGPKGAVGYGVRLLEKFIKEYNR</sequence>
<keyword id="KW-0031">Aminopeptidase</keyword>
<keyword id="KW-0963">Cytoplasm</keyword>
<keyword id="KW-0378">Hydrolase</keyword>
<keyword id="KW-0464">Manganese</keyword>
<keyword id="KW-0479">Metal-binding</keyword>
<keyword id="KW-0645">Protease</keyword>
<name>AMPA_RICCK</name>
<gene>
    <name evidence="1" type="primary">pepA</name>
    <name type="ordered locus">A1E_00730</name>
</gene>
<feature type="chain" id="PRO_1000019973" description="Probable cytosol aminopeptidase">
    <location>
        <begin position="1"/>
        <end position="500"/>
    </location>
</feature>
<feature type="active site" evidence="1">
    <location>
        <position position="276"/>
    </location>
</feature>
<feature type="active site" evidence="1">
    <location>
        <position position="350"/>
    </location>
</feature>
<feature type="binding site" evidence="1">
    <location>
        <position position="264"/>
    </location>
    <ligand>
        <name>Mn(2+)</name>
        <dbReference type="ChEBI" id="CHEBI:29035"/>
        <label>2</label>
    </ligand>
</feature>
<feature type="binding site" evidence="1">
    <location>
        <position position="269"/>
    </location>
    <ligand>
        <name>Mn(2+)</name>
        <dbReference type="ChEBI" id="CHEBI:29035"/>
        <label>1</label>
    </ligand>
</feature>
<feature type="binding site" evidence="1">
    <location>
        <position position="269"/>
    </location>
    <ligand>
        <name>Mn(2+)</name>
        <dbReference type="ChEBI" id="CHEBI:29035"/>
        <label>2</label>
    </ligand>
</feature>
<feature type="binding site" evidence="1">
    <location>
        <position position="287"/>
    </location>
    <ligand>
        <name>Mn(2+)</name>
        <dbReference type="ChEBI" id="CHEBI:29035"/>
        <label>2</label>
    </ligand>
</feature>
<feature type="binding site" evidence="1">
    <location>
        <position position="346"/>
    </location>
    <ligand>
        <name>Mn(2+)</name>
        <dbReference type="ChEBI" id="CHEBI:29035"/>
        <label>1</label>
    </ligand>
</feature>
<feature type="binding site" evidence="1">
    <location>
        <position position="348"/>
    </location>
    <ligand>
        <name>Mn(2+)</name>
        <dbReference type="ChEBI" id="CHEBI:29035"/>
        <label>1</label>
    </ligand>
</feature>
<feature type="binding site" evidence="1">
    <location>
        <position position="348"/>
    </location>
    <ligand>
        <name>Mn(2+)</name>
        <dbReference type="ChEBI" id="CHEBI:29035"/>
        <label>2</label>
    </ligand>
</feature>
<evidence type="ECO:0000255" key="1">
    <source>
        <dbReference type="HAMAP-Rule" id="MF_00181"/>
    </source>
</evidence>
<organism>
    <name type="scientific">Rickettsia canadensis (strain McKiel)</name>
    <dbReference type="NCBI Taxonomy" id="293613"/>
    <lineage>
        <taxon>Bacteria</taxon>
        <taxon>Pseudomonadati</taxon>
        <taxon>Pseudomonadota</taxon>
        <taxon>Alphaproteobacteria</taxon>
        <taxon>Rickettsiales</taxon>
        <taxon>Rickettsiaceae</taxon>
        <taxon>Rickettsieae</taxon>
        <taxon>Rickettsia</taxon>
        <taxon>belli group</taxon>
    </lineage>
</organism>
<reference key="1">
    <citation type="submission" date="2007-09" db="EMBL/GenBank/DDBJ databases">
        <title>Complete genome sequence of Rickettsia canadensis.</title>
        <authorList>
            <person name="Madan A."/>
            <person name="Fahey J."/>
            <person name="Helton E."/>
            <person name="Ketteman M."/>
            <person name="Madan A."/>
            <person name="Rodrigues S."/>
            <person name="Sanchez A."/>
            <person name="Whiting M."/>
            <person name="Dasch G."/>
            <person name="Eremeeva M."/>
        </authorList>
    </citation>
    <scope>NUCLEOTIDE SEQUENCE [LARGE SCALE GENOMIC DNA]</scope>
    <source>
        <strain>McKiel</strain>
    </source>
</reference>
<protein>
    <recommendedName>
        <fullName evidence="1">Probable cytosol aminopeptidase</fullName>
        <ecNumber evidence="1">3.4.11.1</ecNumber>
    </recommendedName>
    <alternativeName>
        <fullName evidence="1">Leucine aminopeptidase</fullName>
        <shortName evidence="1">LAP</shortName>
        <ecNumber evidence="1">3.4.11.10</ecNumber>
    </alternativeName>
    <alternativeName>
        <fullName evidence="1">Leucyl aminopeptidase</fullName>
    </alternativeName>
</protein>